<reference key="1">
    <citation type="journal article" date="2001" name="Nature">
        <title>Complete genome sequence of Salmonella enterica serovar Typhimurium LT2.</title>
        <authorList>
            <person name="McClelland M."/>
            <person name="Sanderson K.E."/>
            <person name="Spieth J."/>
            <person name="Clifton S.W."/>
            <person name="Latreille P."/>
            <person name="Courtney L."/>
            <person name="Porwollik S."/>
            <person name="Ali J."/>
            <person name="Dante M."/>
            <person name="Du F."/>
            <person name="Hou S."/>
            <person name="Layman D."/>
            <person name="Leonard S."/>
            <person name="Nguyen C."/>
            <person name="Scott K."/>
            <person name="Holmes A."/>
            <person name="Grewal N."/>
            <person name="Mulvaney E."/>
            <person name="Ryan E."/>
            <person name="Sun H."/>
            <person name="Florea L."/>
            <person name="Miller W."/>
            <person name="Stoneking T."/>
            <person name="Nhan M."/>
            <person name="Waterston R."/>
            <person name="Wilson R.K."/>
        </authorList>
    </citation>
    <scope>NUCLEOTIDE SEQUENCE [LARGE SCALE GENOMIC DNA]</scope>
    <source>
        <strain>LT2 / SGSC1412 / ATCC 700720</strain>
    </source>
</reference>
<reference key="2">
    <citation type="journal article" date="1974" name="Arch. Biochem. Biophys.">
        <title>Deoxyribose-5-P aldolase: subunit structure and composition of active site lysine region.</title>
        <authorList>
            <person name="Hoffee P."/>
            <person name="Snyder P."/>
            <person name="Sushak C."/>
            <person name="Jargiello P."/>
        </authorList>
    </citation>
    <scope>FUNCTION</scope>
    <scope>CATALYTIC ACTIVITY</scope>
    <scope>SUBUNIT</scope>
</reference>
<sequence>MTDLKASSLRALKLMDLTTLNDDDTNEKVIALCHQAKTPVGNTAAICIYPRFIPIARKTLKEQGTPDIRIATVTNFPHGNDDIDIALAETRAAIAYGADEVDVVFPYRALIAGNEQVGFDLVKACKDACAAANVLLKVIIETGELKEEALIRKASEISIKAGADFIKTSTGKVPVNATPESARIMMEVIRDMGVSKTVGFKPAGGVRTAEDAQKFLAIADELFGADWADSRHYRFGASSLLASLLKALGHGDGKSASSY</sequence>
<dbReference type="EC" id="4.1.2.4" evidence="1 2"/>
<dbReference type="EMBL" id="AE006468">
    <property type="protein sequence ID" value="AAL23382.1"/>
    <property type="status" value="ALT_INIT"/>
    <property type="molecule type" value="Genomic_DNA"/>
</dbReference>
<dbReference type="RefSeq" id="NP_463423.1">
    <property type="nucleotide sequence ID" value="NC_003197.2"/>
</dbReference>
<dbReference type="RefSeq" id="WP_001127752.1">
    <property type="nucleotide sequence ID" value="NC_003197.2"/>
</dbReference>
<dbReference type="SMR" id="Q8ZJV8"/>
<dbReference type="STRING" id="99287.STM4567"/>
<dbReference type="PaxDb" id="99287-STM4567"/>
<dbReference type="GeneID" id="1256093"/>
<dbReference type="KEGG" id="stm:STM4567"/>
<dbReference type="PATRIC" id="fig|99287.12.peg.4809"/>
<dbReference type="HOGENOM" id="CLU_053595_3_1_6"/>
<dbReference type="PhylomeDB" id="Q8ZJV8"/>
<dbReference type="UniPathway" id="UPA00002">
    <property type="reaction ID" value="UER00468"/>
</dbReference>
<dbReference type="Proteomes" id="UP000001014">
    <property type="component" value="Chromosome"/>
</dbReference>
<dbReference type="GO" id="GO:0005737">
    <property type="term" value="C:cytoplasm"/>
    <property type="evidence" value="ECO:0007669"/>
    <property type="project" value="UniProtKB-SubCell"/>
</dbReference>
<dbReference type="GO" id="GO:0004139">
    <property type="term" value="F:deoxyribose-phosphate aldolase activity"/>
    <property type="evidence" value="ECO:0000318"/>
    <property type="project" value="GO_Central"/>
</dbReference>
<dbReference type="GO" id="GO:0006018">
    <property type="term" value="P:2-deoxyribose 1-phosphate catabolic process"/>
    <property type="evidence" value="ECO:0007669"/>
    <property type="project" value="UniProtKB-UniRule"/>
</dbReference>
<dbReference type="GO" id="GO:0016052">
    <property type="term" value="P:carbohydrate catabolic process"/>
    <property type="evidence" value="ECO:0000318"/>
    <property type="project" value="GO_Central"/>
</dbReference>
<dbReference type="GO" id="GO:0009264">
    <property type="term" value="P:deoxyribonucleotide catabolic process"/>
    <property type="evidence" value="ECO:0000318"/>
    <property type="project" value="GO_Central"/>
</dbReference>
<dbReference type="CDD" id="cd00959">
    <property type="entry name" value="DeoC"/>
    <property type="match status" value="1"/>
</dbReference>
<dbReference type="FunFam" id="3.20.20.70:FF:000034">
    <property type="entry name" value="Deoxyribose-phosphate aldolase"/>
    <property type="match status" value="1"/>
</dbReference>
<dbReference type="Gene3D" id="3.20.20.70">
    <property type="entry name" value="Aldolase class I"/>
    <property type="match status" value="1"/>
</dbReference>
<dbReference type="HAMAP" id="MF_00592">
    <property type="entry name" value="DeoC_type2"/>
    <property type="match status" value="1"/>
</dbReference>
<dbReference type="InterPro" id="IPR013785">
    <property type="entry name" value="Aldolase_TIM"/>
</dbReference>
<dbReference type="InterPro" id="IPR011343">
    <property type="entry name" value="DeoC"/>
</dbReference>
<dbReference type="InterPro" id="IPR002915">
    <property type="entry name" value="DeoC/FbaB/LacD_aldolase"/>
</dbReference>
<dbReference type="InterPro" id="IPR023649">
    <property type="entry name" value="DeoC_typeII"/>
</dbReference>
<dbReference type="NCBIfam" id="TIGR00126">
    <property type="entry name" value="deoC"/>
    <property type="match status" value="1"/>
</dbReference>
<dbReference type="PANTHER" id="PTHR10889">
    <property type="entry name" value="DEOXYRIBOSE-PHOSPHATE ALDOLASE"/>
    <property type="match status" value="1"/>
</dbReference>
<dbReference type="PANTHER" id="PTHR10889:SF3">
    <property type="entry name" value="DEOXYRIBOSE-PHOSPHATE ALDOLASE"/>
    <property type="match status" value="1"/>
</dbReference>
<dbReference type="Pfam" id="PF01791">
    <property type="entry name" value="DeoC"/>
    <property type="match status" value="1"/>
</dbReference>
<dbReference type="PIRSF" id="PIRSF001357">
    <property type="entry name" value="DeoC"/>
    <property type="match status" value="1"/>
</dbReference>
<dbReference type="SMART" id="SM01133">
    <property type="entry name" value="DeoC"/>
    <property type="match status" value="1"/>
</dbReference>
<dbReference type="SUPFAM" id="SSF51569">
    <property type="entry name" value="Aldolase"/>
    <property type="match status" value="1"/>
</dbReference>
<name>DEOC_SALTY</name>
<organism>
    <name type="scientific">Salmonella typhimurium (strain LT2 / SGSC1412 / ATCC 700720)</name>
    <dbReference type="NCBI Taxonomy" id="99287"/>
    <lineage>
        <taxon>Bacteria</taxon>
        <taxon>Pseudomonadati</taxon>
        <taxon>Pseudomonadota</taxon>
        <taxon>Gammaproteobacteria</taxon>
        <taxon>Enterobacterales</taxon>
        <taxon>Enterobacteriaceae</taxon>
        <taxon>Salmonella</taxon>
    </lineage>
</organism>
<protein>
    <recommendedName>
        <fullName evidence="1">Deoxyribose-phosphate aldolase</fullName>
        <shortName evidence="1">DERA</shortName>
        <ecNumber evidence="1 2">4.1.2.4</ecNumber>
    </recommendedName>
    <alternativeName>
        <fullName evidence="1">2-deoxy-D-ribose 5-phosphate aldolase</fullName>
    </alternativeName>
    <alternativeName>
        <fullName evidence="1">Phosphodeoxyriboaldolase</fullName>
        <shortName evidence="1">Deoxyriboaldolase</shortName>
    </alternativeName>
</protein>
<feature type="chain" id="PRO_0000057302" description="Deoxyribose-phosphate aldolase">
    <location>
        <begin position="1"/>
        <end position="259"/>
    </location>
</feature>
<feature type="active site" description="Proton donor/acceptor" evidence="1">
    <location>
        <position position="102"/>
    </location>
</feature>
<feature type="active site" description="Schiff-base intermediate with acetaldehyde" evidence="1">
    <location>
        <position position="167"/>
    </location>
</feature>
<feature type="active site" description="Proton donor/acceptor" evidence="1">
    <location>
        <position position="201"/>
    </location>
</feature>
<keyword id="KW-0963">Cytoplasm</keyword>
<keyword id="KW-0456">Lyase</keyword>
<keyword id="KW-1185">Reference proteome</keyword>
<keyword id="KW-0704">Schiff base</keyword>
<proteinExistence type="evidence at protein level"/>
<gene>
    <name evidence="1" type="primary">deoC</name>
    <name type="ordered locus">STM4567</name>
</gene>
<accession>Q8ZJV8</accession>
<comment type="function">
    <text evidence="1 2">Catalyzes a reversible aldol reaction between acetaldehyde and D-glyceraldehyde 3-phosphate to generate 2-deoxy-D-ribose 5-phosphate.</text>
</comment>
<comment type="catalytic activity">
    <reaction evidence="1 2">
        <text>2-deoxy-D-ribose 5-phosphate = D-glyceraldehyde 3-phosphate + acetaldehyde</text>
        <dbReference type="Rhea" id="RHEA:12821"/>
        <dbReference type="ChEBI" id="CHEBI:15343"/>
        <dbReference type="ChEBI" id="CHEBI:59776"/>
        <dbReference type="ChEBI" id="CHEBI:62877"/>
        <dbReference type="EC" id="4.1.2.4"/>
    </reaction>
</comment>
<comment type="pathway">
    <text evidence="1">Carbohydrate degradation; 2-deoxy-D-ribose 1-phosphate degradation; D-glyceraldehyde 3-phosphate and acetaldehyde from 2-deoxy-alpha-D-ribose 1-phosphate: step 2/2.</text>
</comment>
<comment type="subunit">
    <text evidence="2">Homodimer.</text>
</comment>
<comment type="subcellular location">
    <subcellularLocation>
        <location evidence="1">Cytoplasm</location>
    </subcellularLocation>
</comment>
<comment type="similarity">
    <text evidence="1 3">Belongs to the DeoC/FbaB aldolase family. DeoC type 2 subfamily.</text>
</comment>
<comment type="sequence caution" evidence="3">
    <conflict type="erroneous initiation">
        <sequence resource="EMBL-CDS" id="AAL23382"/>
    </conflict>
</comment>
<evidence type="ECO:0000255" key="1">
    <source>
        <dbReference type="HAMAP-Rule" id="MF_00592"/>
    </source>
</evidence>
<evidence type="ECO:0000269" key="2">
    <source>
    </source>
</evidence>
<evidence type="ECO:0000305" key="3"/>